<gene>
    <name type="primary">Ptprr</name>
    <name type="synonym">Ptp13</name>
</gene>
<accession>Q62132</accession>
<accession>Q64491</accession>
<accession>Q64492</accession>
<accession>Q9QUH9</accession>
<keyword id="KW-0002">3D-structure</keyword>
<keyword id="KW-0025">Alternative splicing</keyword>
<keyword id="KW-1003">Cell membrane</keyword>
<keyword id="KW-0963">Cytoplasm</keyword>
<keyword id="KW-0325">Glycoprotein</keyword>
<keyword id="KW-0378">Hydrolase</keyword>
<keyword id="KW-0472">Membrane</keyword>
<keyword id="KW-0597">Phosphoprotein</keyword>
<keyword id="KW-0904">Protein phosphatase</keyword>
<keyword id="KW-0654">Proteoglycan</keyword>
<keyword id="KW-0675">Receptor</keyword>
<keyword id="KW-1185">Reference proteome</keyword>
<keyword id="KW-0732">Signal</keyword>
<keyword id="KW-0812">Transmembrane</keyword>
<keyword id="KW-1133">Transmembrane helix</keyword>
<feature type="signal peptide" evidence="3">
    <location>
        <begin position="1"/>
        <end position="23"/>
    </location>
</feature>
<feature type="chain" id="PRO_0000025460" description="Receptor-type tyrosine-protein phosphatase R">
    <location>
        <begin position="24"/>
        <end position="656"/>
    </location>
</feature>
<feature type="topological domain" description="Extracellular" evidence="3">
    <location>
        <begin position="24"/>
        <end position="226"/>
    </location>
</feature>
<feature type="transmembrane region" description="Helical" evidence="3">
    <location>
        <begin position="227"/>
        <end position="247"/>
    </location>
</feature>
<feature type="topological domain" description="Cytoplasmic" evidence="3">
    <location>
        <begin position="248"/>
        <end position="656"/>
    </location>
</feature>
<feature type="domain" description="Tyrosine-protein phosphatase" evidence="4">
    <location>
        <begin position="392"/>
        <end position="646"/>
    </location>
</feature>
<feature type="region of interest" description="Disordered" evidence="6">
    <location>
        <begin position="269"/>
        <end position="289"/>
    </location>
</feature>
<feature type="compositionally biased region" description="Polar residues" evidence="6">
    <location>
        <begin position="274"/>
        <end position="289"/>
    </location>
</feature>
<feature type="active site" description="Phosphocysteine intermediate" evidence="4 5">
    <location>
        <position position="587"/>
    </location>
</feature>
<feature type="binding site" evidence="1">
    <location>
        <position position="553"/>
    </location>
    <ligand>
        <name>substrate</name>
    </ligand>
</feature>
<feature type="binding site" evidence="1">
    <location>
        <begin position="587"/>
        <end position="593"/>
    </location>
    <ligand>
        <name>substrate</name>
    </ligand>
</feature>
<feature type="binding site" evidence="1">
    <location>
        <position position="631"/>
    </location>
    <ligand>
        <name>substrate</name>
    </ligand>
</feature>
<feature type="modified residue" description="Phosphoserine" evidence="15">
    <location>
        <position position="271"/>
    </location>
</feature>
<feature type="modified residue" description="Phosphoserine; by PKA" evidence="7">
    <location>
        <position position="338"/>
    </location>
</feature>
<feature type="glycosylation site" description="O-linked (Xyl...) (chondroitin sulfate) serine" evidence="2">
    <location>
        <position position="23"/>
    </location>
</feature>
<feature type="glycosylation site" description="N-linked (GlcNAc...) asparagine" evidence="3">
    <location>
        <position position="128"/>
    </location>
</feature>
<feature type="splice variant" id="VSP_005161" description="In isoform Gamma." evidence="12">
    <location>
        <begin position="1"/>
        <end position="244"/>
    </location>
</feature>
<feature type="splice variant" id="VSP_005159" description="In isoform Beta." evidence="13">
    <location>
        <begin position="1"/>
        <end position="107"/>
    </location>
</feature>
<feature type="splice variant" id="VSP_005160" description="In isoform Beta." evidence="13">
    <original>LPIPAANVIVVTLQ</original>
    <variation>MHRNTRSVSTPTLQ</variation>
    <location>
        <begin position="108"/>
        <end position="121"/>
    </location>
</feature>
<feature type="mutagenesis site" description="Loss of phosphorylation by PKA, constitutive MAPK binding." evidence="7">
    <original>S</original>
    <variation>A</variation>
    <location>
        <position position="338"/>
    </location>
</feature>
<feature type="mutagenesis site" description="Mimics phosphorylation by PKA, prevents MAPK binding." evidence="7">
    <original>S</original>
    <variation>E</variation>
    <location>
        <position position="338"/>
    </location>
</feature>
<feature type="mutagenesis site" description="Loss of phosphatase activity." evidence="7">
    <original>C</original>
    <variation>S</variation>
    <location>
        <position position="587"/>
    </location>
</feature>
<feature type="mutagenesis site" description="Loss of phosphatase activity." evidence="7">
    <original>R</original>
    <variation>M</variation>
    <location>
        <position position="593"/>
    </location>
</feature>
<feature type="helix" evidence="16">
    <location>
        <begin position="363"/>
        <end position="372"/>
    </location>
</feature>
<feature type="helix" evidence="16">
    <location>
        <begin position="379"/>
        <end position="387"/>
    </location>
</feature>
<feature type="turn" evidence="16">
    <location>
        <begin position="388"/>
        <end position="390"/>
    </location>
</feature>
<feature type="helix" evidence="16">
    <location>
        <begin position="391"/>
        <end position="398"/>
    </location>
</feature>
<feature type="turn" evidence="16">
    <location>
        <begin position="406"/>
        <end position="408"/>
    </location>
</feature>
<feature type="helix" evidence="16">
    <location>
        <begin position="414"/>
        <end position="417"/>
    </location>
</feature>
<feature type="helix" evidence="16">
    <location>
        <begin position="427"/>
        <end position="429"/>
    </location>
</feature>
<feature type="helix" evidence="16">
    <location>
        <begin position="442"/>
        <end position="444"/>
    </location>
</feature>
<feature type="strand" evidence="16">
    <location>
        <begin position="447"/>
        <end position="451"/>
    </location>
</feature>
<feature type="helix" evidence="16">
    <location>
        <begin position="454"/>
        <end position="456"/>
    </location>
</feature>
<feature type="strand" evidence="16">
    <location>
        <begin position="460"/>
        <end position="464"/>
    </location>
</feature>
<feature type="helix" evidence="16">
    <location>
        <begin position="469"/>
        <end position="471"/>
    </location>
</feature>
<feature type="helix" evidence="16">
    <location>
        <begin position="472"/>
        <end position="481"/>
    </location>
</feature>
<feature type="strand" evidence="16">
    <location>
        <begin position="486"/>
        <end position="489"/>
    </location>
</feature>
<feature type="strand" evidence="16">
    <location>
        <begin position="493"/>
        <end position="498"/>
    </location>
</feature>
<feature type="strand" evidence="16">
    <location>
        <begin position="506"/>
        <end position="511"/>
    </location>
</feature>
<feature type="strand" evidence="16">
    <location>
        <begin position="514"/>
        <end position="523"/>
    </location>
</feature>
<feature type="strand" evidence="16">
    <location>
        <begin position="525"/>
        <end position="536"/>
    </location>
</feature>
<feature type="strand" evidence="16">
    <location>
        <begin position="539"/>
        <end position="548"/>
    </location>
</feature>
<feature type="helix" evidence="16">
    <location>
        <begin position="561"/>
        <end position="575"/>
    </location>
</feature>
<feature type="strand" evidence="16">
    <location>
        <begin position="583"/>
        <end position="591"/>
    </location>
</feature>
<feature type="helix" evidence="16">
    <location>
        <begin position="592"/>
        <end position="610"/>
    </location>
</feature>
<feature type="strand" evidence="16">
    <location>
        <begin position="611"/>
        <end position="613"/>
    </location>
</feature>
<feature type="helix" evidence="16">
    <location>
        <begin position="615"/>
        <end position="625"/>
    </location>
</feature>
<feature type="helix" evidence="16">
    <location>
        <begin position="633"/>
        <end position="648"/>
    </location>
</feature>
<sequence length="656" mass="74036">MRRAVGFPALCLLLNLHAAGCFSRNNDHFLAIRQKKSWKPVFIYDHSQDIKKSLDIAQEAYKHNYHSPSEVQISKHHQIINSAFPRPAYDPSLNLLAESDQDLEIENLPIPAANVIVVTLQMDITKLNITLLRIFRQGVAAALGLLPQQVHINRLIEKKNQVELFVSPGNRKPGETQALQAEEVLRSLNVDGLHQSLPQFGITDVAPEKNVLQGQHEADKIWSKEGFYAVVIFLSIFIIIVTCLMIIYRLKERLQLSLRQDKEKNQEIHLSPIARQQAQSEAKTTHSMVQPDQAPKVLNVVVDPQGQCTPEIRNSTSTSVCPSPFRMKPIGLQERRGSNVSLTLDMSSLGSVEPFVAVSTPREKVAMEYLQSASRVLTRSQLRDVVASSHLLQSEFMEIPMNFVDPKEIDIPRHGTKNRYKTILPNPLSRVCLRPKNITDSLSTYINANYIRGYSGKEKAFIATQGPMINTVNDFWQMVWQEDSPVIVMITKLKEKNEKCVLYWPEKRGIYGKVEVLVTGVTECDNYTIRNLVLKQGSHTQHVKHYWYTSWPDHKTPDSAQPLLQLMLDVEEDRLASEGRGPVVVHCSAGIGRTGCFIATSIGCQQLKEEGVVDALSIVCQLRVDRGGMVQTSEQYEFVHHALCLFESRLSPETVE</sequence>
<comment type="function">
    <text evidence="7 9">Sequesters mitogen-activated protein kinases (MAPKs) such as MAPK1, MAPK3 and MAPK14 in the cytoplasm in an inactive form. The MAPKs bind to a dephosphorylated kinase interacting motif, phosphorylation of which by the protein kinase A complex releases the MAPKs for activation and translocation into the nucleus. Isoform gamma may have a role in patterning and cellular proliferation of skeletal elements in the precartilaginous/cartilaginous skeleton.</text>
</comment>
<comment type="catalytic activity">
    <reaction evidence="5">
        <text>O-phospho-L-tyrosyl-[protein] + H2O = L-tyrosyl-[protein] + phosphate</text>
        <dbReference type="Rhea" id="RHEA:10684"/>
        <dbReference type="Rhea" id="RHEA-COMP:10136"/>
        <dbReference type="Rhea" id="RHEA-COMP:20101"/>
        <dbReference type="ChEBI" id="CHEBI:15377"/>
        <dbReference type="ChEBI" id="CHEBI:43474"/>
        <dbReference type="ChEBI" id="CHEBI:46858"/>
        <dbReference type="ChEBI" id="CHEBI:61978"/>
        <dbReference type="EC" id="3.1.3.48"/>
    </reaction>
</comment>
<comment type="subunit">
    <text evidence="7">Interacts with MAPKs.</text>
</comment>
<comment type="interaction">
    <interactant intactId="EBI-6954051">
        <id>Q62132</id>
    </interactant>
    <interactant intactId="EBI-397697">
        <id>P63085</id>
        <label>Mapk1</label>
    </interactant>
    <organismsDiffer>false</organismsDiffer>
    <experiments>5</experiments>
</comment>
<comment type="interaction">
    <interactant intactId="EBI-6954051">
        <id>Q62132</id>
    </interactant>
    <interactant intactId="EBI-73995">
        <id>P27361</id>
        <label>MAPK3</label>
    </interactant>
    <organismsDiffer>true</organismsDiffer>
    <experiments>3</experiments>
</comment>
<comment type="subcellular location">
    <molecule>Isoform Alpha</molecule>
    <subcellularLocation>
        <location>Cell membrane</location>
        <topology>Single-pass type I membrane protein</topology>
    </subcellularLocation>
</comment>
<comment type="subcellular location">
    <molecule>Isoform Beta</molecule>
    <subcellularLocation>
        <location>Cytoplasm</location>
    </subcellularLocation>
    <text>Locates to the areas within the cytoplasm.</text>
</comment>
<comment type="subcellular location">
    <molecule>Isoform Gamma</molecule>
    <subcellularLocation>
        <location>Cytoplasm</location>
    </subcellularLocation>
    <text>Locates to the areas within the cytoplasm.</text>
</comment>
<comment type="alternative products">
    <event type="alternative splicing"/>
    <isoform>
        <id>Q62132-1</id>
        <name>Alpha</name>
        <name>PTPBR7</name>
        <sequence type="displayed"/>
    </isoform>
    <isoform>
        <id>Q62132-2</id>
        <name>Beta</name>
        <name>PTP-SL</name>
        <sequence type="described" ref="VSP_005159 VSP_005160"/>
    </isoform>
    <isoform>
        <id>Q62132-3</id>
        <name>Gamma</name>
        <sequence type="described" ref="VSP_005161"/>
    </isoform>
</comment>
<comment type="tissue specificity">
    <text evidence="8 9 10 11">Expressed in the heart, brain, spleen, lung, liver, skeletal muscle, kidney and testis. Isoform alpha is expressed throughout the granular layer of the cerebellar but not within the Purkinje cells, also in the villi of the ileum and jejunum and both the villi and crypts of the duodenum. Isoform beta is expressed only in the Purkinje cells. Isoform gamma is expressed throughout the brain, the villi and crypts of the duodenum, jejunum and ileum and expressed at low levels in the proximal colon.</text>
</comment>
<comment type="developmental stage">
    <text evidence="9">Isoform gamma is the only family member developmentally expressed. Expressed throughout the brain in 15.5 day embryos and in cranial nerve cells, skeletal tissues such as neural crest-derived face bones, and the periphery of cartilaginous skeletal elements including the rib and vertebrae anlage. On day 17.5, expression was observed throughout the brain, trigeminal ganglion, cranofacial bones, oral-facial structures, cervical vertebrae, axis and the ileum. Expression continued in the vertebral column throughout ossification.</text>
</comment>
<comment type="similarity">
    <text evidence="14">Belongs to the protein-tyrosine phosphatase family. Receptor class 7 subfamily.</text>
</comment>
<comment type="sequence caution" evidence="14">
    <conflict type="erroneous initiation">
        <sequence resource="EMBL-CDS" id="CAA82958"/>
    </conflict>
</comment>
<name>PTPRR_MOUSE</name>
<organism>
    <name type="scientific">Mus musculus</name>
    <name type="common">Mouse</name>
    <dbReference type="NCBI Taxonomy" id="10090"/>
    <lineage>
        <taxon>Eukaryota</taxon>
        <taxon>Metazoa</taxon>
        <taxon>Chordata</taxon>
        <taxon>Craniata</taxon>
        <taxon>Vertebrata</taxon>
        <taxon>Euteleostomi</taxon>
        <taxon>Mammalia</taxon>
        <taxon>Eutheria</taxon>
        <taxon>Euarchontoglires</taxon>
        <taxon>Glires</taxon>
        <taxon>Rodentia</taxon>
        <taxon>Myomorpha</taxon>
        <taxon>Muroidea</taxon>
        <taxon>Muridae</taxon>
        <taxon>Murinae</taxon>
        <taxon>Mus</taxon>
        <taxon>Mus</taxon>
    </lineage>
</organism>
<reference key="1">
    <citation type="journal article" date="1995" name="J. Biol. Chem.">
        <title>cDNA cloning and characterization of a novel receptor-type protein tyrosine phosphatase expressed predominantly in the brain.</title>
        <authorList>
            <person name="Ogata M."/>
            <person name="Sawada M."/>
            <person name="Fujino Y."/>
            <person name="Hamaoka T."/>
        </authorList>
    </citation>
    <scope>NUCLEOTIDE SEQUENCE [MRNA] (ISOFORM ALPHA)</scope>
    <scope>TISSUE SPECIFICITY</scope>
    <source>
        <strain>C57BL/6J</strain>
        <tissue>Brain</tissue>
    </source>
</reference>
<reference key="2">
    <citation type="journal article" date="1995" name="Biochem. J.">
        <title>A novel receptor-type protein tyrosine phosphatase with a single catalytic domain is specifically expressed in mouse brain.</title>
        <authorList>
            <person name="Hendriks W."/>
            <person name="Schepens J."/>
            <person name="Brugman C."/>
            <person name="Zeeuwen P."/>
            <person name="Wieringa B."/>
        </authorList>
    </citation>
    <scope>NUCLEOTIDE SEQUENCE [MRNA] (ISOFORM BETA)</scope>
    <scope>TISSUE SPECIFICITY</scope>
    <source>
        <strain>BALB/cJ</strain>
        <tissue>Brain</tissue>
    </source>
</reference>
<reference key="3">
    <citation type="journal article" date="2000" name="Anat. Rec.">
        <title>Protein tyrosine phosphatase (PC12, Br7,Sl) family: expression characterization in the adult human and mouse.</title>
        <authorList>
            <person name="Augustine K.A."/>
            <person name="Silbiger S.M."/>
            <person name="Bucay N."/>
            <person name="Ulias L."/>
            <person name="Boynton A."/>
            <person name="Trebasky L.D."/>
            <person name="Medlock E.S."/>
        </authorList>
    </citation>
    <scope>NUCLEOTIDE SEQUENCE [MRNA]</scope>
    <scope>ALTERNATIVE SPLICING</scope>
    <scope>TISSUE SPECIFICITY</scope>
    <source>
        <tissue>Colon</tissue>
    </source>
</reference>
<reference key="4">
    <citation type="journal article" date="2000" name="Int. J. Dev. Biol.">
        <title>Evidence that the protein tyrosine phosphatase (PC12,Br7,Sl) gamma (-) isoform modulates chondrogenic patterning and growth.</title>
        <authorList>
            <person name="Augustine K.A."/>
            <person name="Rossi R.M."/>
            <person name="Silbiger S.M."/>
            <person name="Bucay N."/>
            <person name="Duryea D."/>
            <person name="Marshall W.S."/>
            <person name="Medlock E.S."/>
        </authorList>
    </citation>
    <scope>NUCLEOTIDE SEQUENCE [MRNA] (ISOFORM GAMMA)</scope>
    <scope>FUNCTION</scope>
    <scope>TISSUE SPECIFICITY</scope>
    <scope>DEVELOPMENTAL STAGE</scope>
</reference>
<reference key="5">
    <citation type="journal article" date="1999" name="J. Cell Biol.">
        <title>A novel regulatory mechanism of MAP kinases activation and nuclear translocation mediated by PKA and the PTP-SL tyrosine phosphatase.</title>
        <authorList>
            <person name="Blanco-Aparicio C."/>
            <person name="Torres J."/>
            <person name="Pulido R."/>
        </authorList>
    </citation>
    <scope>FUNCTION</scope>
    <scope>INTERACTION WITH MAPK1; MAPK3 AND MAPK14</scope>
    <scope>SUBCELLULAR LOCATION</scope>
    <scope>PHOSPHORYLATION AT SER-338</scope>
    <scope>MUTAGENESIS OF SER-338; CYS-587 AND ARG-593</scope>
    <source>
        <tissue>Brain</tissue>
    </source>
</reference>
<reference key="6">
    <citation type="journal article" date="2010" name="Cell">
        <title>A tissue-specific atlas of mouse protein phosphorylation and expression.</title>
        <authorList>
            <person name="Huttlin E.L."/>
            <person name="Jedrychowski M.P."/>
            <person name="Elias J.E."/>
            <person name="Goswami T."/>
            <person name="Rad R."/>
            <person name="Beausoleil S.A."/>
            <person name="Villen J."/>
            <person name="Haas W."/>
            <person name="Sowa M.E."/>
            <person name="Gygi S.P."/>
        </authorList>
    </citation>
    <scope>PHOSPHORYLATION [LARGE SCALE ANALYSIS] AT SER-271</scope>
    <scope>IDENTIFICATION BY MASS SPECTROMETRY [LARGE SCALE ANALYSIS]</scope>
    <source>
        <tissue>Brain</tissue>
    </source>
</reference>
<protein>
    <recommendedName>
        <fullName>Receptor-type tyrosine-protein phosphatase R</fullName>
        <shortName>R-PTP-R</shortName>
        <ecNumber>3.1.3.48</ecNumber>
    </recommendedName>
    <alternativeName>
        <fullName>Phosphotyrosine phosphatase 13</fullName>
    </alternativeName>
    <alternativeName>
        <fullName>Protein-tyrosine-phosphatase SL</fullName>
    </alternativeName>
</protein>
<dbReference type="EC" id="3.1.3.48"/>
<dbReference type="EMBL" id="D31898">
    <property type="protein sequence ID" value="BAA06696.1"/>
    <property type="molecule type" value="mRNA"/>
</dbReference>
<dbReference type="EMBL" id="Z30313">
    <property type="protein sequence ID" value="CAA82957.1"/>
    <property type="molecule type" value="mRNA"/>
</dbReference>
<dbReference type="EMBL" id="Z30313">
    <property type="protein sequence ID" value="CAA82958.1"/>
    <property type="status" value="ALT_INIT"/>
    <property type="molecule type" value="mRNA"/>
</dbReference>
<dbReference type="EMBL" id="AF129509">
    <property type="protein sequence ID" value="AAD29673.1"/>
    <property type="molecule type" value="mRNA"/>
</dbReference>
<dbReference type="EMBL" id="AF041866">
    <property type="protein sequence ID" value="AAD09171.1"/>
    <property type="molecule type" value="mRNA"/>
</dbReference>
<dbReference type="CCDS" id="CCDS24182.1">
    <molecule id="Q62132-1"/>
</dbReference>
<dbReference type="CCDS" id="CCDS48693.1">
    <molecule id="Q62132-3"/>
</dbReference>
<dbReference type="CCDS" id="CCDS56750.1">
    <molecule id="Q62132-2"/>
</dbReference>
<dbReference type="PIR" id="A55574">
    <property type="entry name" value="A55574"/>
</dbReference>
<dbReference type="RefSeq" id="NP_001155309.1">
    <molecule id="Q62132-2"/>
    <property type="nucleotide sequence ID" value="NM_001161837.2"/>
</dbReference>
<dbReference type="RefSeq" id="NP_001155310.1">
    <molecule id="Q62132-3"/>
    <property type="nucleotide sequence ID" value="NM_001161838.2"/>
</dbReference>
<dbReference type="RefSeq" id="NP_001155311.1">
    <molecule id="Q62132-3"/>
    <property type="nucleotide sequence ID" value="NM_001161839.2"/>
</dbReference>
<dbReference type="RefSeq" id="NP_001155312.1">
    <molecule id="Q62132-3"/>
    <property type="nucleotide sequence ID" value="NM_001161840.2"/>
</dbReference>
<dbReference type="RefSeq" id="NP_035347.1">
    <molecule id="Q62132-1"/>
    <property type="nucleotide sequence ID" value="NM_011217.3"/>
</dbReference>
<dbReference type="PDB" id="1JLN">
    <property type="method" value="X-ray"/>
    <property type="resolution" value="1.81 A"/>
    <property type="chains" value="A=361-655"/>
</dbReference>
<dbReference type="PDBsum" id="1JLN"/>
<dbReference type="SMR" id="Q62132"/>
<dbReference type="BioGRID" id="202506">
    <property type="interactions" value="4"/>
</dbReference>
<dbReference type="ELM" id="Q62132"/>
<dbReference type="FunCoup" id="Q62132">
    <property type="interactions" value="842"/>
</dbReference>
<dbReference type="IntAct" id="Q62132">
    <property type="interactions" value="5"/>
</dbReference>
<dbReference type="MINT" id="Q62132"/>
<dbReference type="STRING" id="10090.ENSMUSP00000064392"/>
<dbReference type="GlyCosmos" id="Q62132">
    <property type="glycosylation" value="1 site, No reported glycans"/>
</dbReference>
<dbReference type="GlyGen" id="Q62132">
    <property type="glycosylation" value="3 sites, 1 N-linked glycan (1 site)"/>
</dbReference>
<dbReference type="iPTMnet" id="Q62132"/>
<dbReference type="PhosphoSitePlus" id="Q62132"/>
<dbReference type="PaxDb" id="10090-ENSMUSP00000064392"/>
<dbReference type="ProteomicsDB" id="301950">
    <molecule id="Q62132-1"/>
</dbReference>
<dbReference type="ProteomicsDB" id="301951">
    <molecule id="Q62132-2"/>
</dbReference>
<dbReference type="ProteomicsDB" id="301952">
    <molecule id="Q62132-3"/>
</dbReference>
<dbReference type="Antibodypedia" id="2547">
    <property type="antibodies" value="280 antibodies from 29 providers"/>
</dbReference>
<dbReference type="DNASU" id="19279"/>
<dbReference type="Ensembl" id="ENSMUST00000063470.11">
    <molecule id="Q62132-1"/>
    <property type="protein sequence ID" value="ENSMUSP00000064392.5"/>
    <property type="gene ID" value="ENSMUSG00000020151.17"/>
</dbReference>
<dbReference type="Ensembl" id="ENSMUST00000105271.9">
    <molecule id="Q62132-2"/>
    <property type="protein sequence ID" value="ENSMUSP00000100907.3"/>
    <property type="gene ID" value="ENSMUSG00000020151.17"/>
</dbReference>
<dbReference type="Ensembl" id="ENSMUST00000128399.2">
    <molecule id="Q62132-3"/>
    <property type="protein sequence ID" value="ENSMUSP00000114455.2"/>
    <property type="gene ID" value="ENSMUSG00000020151.17"/>
</dbReference>
<dbReference type="Ensembl" id="ENSMUST00000148731.8">
    <molecule id="Q62132-3"/>
    <property type="protein sequence ID" value="ENSMUSP00000120965.2"/>
    <property type="gene ID" value="ENSMUSG00000020151.17"/>
</dbReference>
<dbReference type="Ensembl" id="ENSMUST00000155606.8">
    <molecule id="Q62132-3"/>
    <property type="protein sequence ID" value="ENSMUSP00000122259.2"/>
    <property type="gene ID" value="ENSMUSG00000020151.17"/>
</dbReference>
<dbReference type="GeneID" id="19279"/>
<dbReference type="KEGG" id="mmu:19279"/>
<dbReference type="UCSC" id="uc007hbp.2">
    <molecule id="Q62132-1"/>
    <property type="organism name" value="mouse"/>
</dbReference>
<dbReference type="UCSC" id="uc007hbr.2">
    <molecule id="Q62132-2"/>
    <property type="organism name" value="mouse"/>
</dbReference>
<dbReference type="AGR" id="MGI:109559"/>
<dbReference type="CTD" id="5801"/>
<dbReference type="MGI" id="MGI:109559">
    <property type="gene designation" value="Ptprr"/>
</dbReference>
<dbReference type="VEuPathDB" id="HostDB:ENSMUSG00000020151"/>
<dbReference type="eggNOG" id="KOG0789">
    <property type="taxonomic scope" value="Eukaryota"/>
</dbReference>
<dbReference type="GeneTree" id="ENSGT00940000157212"/>
<dbReference type="HOGENOM" id="CLU_001645_10_0_1"/>
<dbReference type="InParanoid" id="Q62132"/>
<dbReference type="OMA" id="NVQECEN"/>
<dbReference type="OrthoDB" id="9993594at2759"/>
<dbReference type="PhylomeDB" id="Q62132"/>
<dbReference type="TreeFam" id="TF331016"/>
<dbReference type="BioGRID-ORCS" id="19279">
    <property type="hits" value="0 hits in 78 CRISPR screens"/>
</dbReference>
<dbReference type="ChiTaRS" id="Ptprr">
    <property type="organism name" value="mouse"/>
</dbReference>
<dbReference type="EvolutionaryTrace" id="Q62132"/>
<dbReference type="PRO" id="PR:Q62132"/>
<dbReference type="Proteomes" id="UP000000589">
    <property type="component" value="Chromosome 10"/>
</dbReference>
<dbReference type="RNAct" id="Q62132">
    <property type="molecule type" value="protein"/>
</dbReference>
<dbReference type="Bgee" id="ENSMUSG00000020151">
    <property type="expression patterns" value="Expressed in ileal epithelium and 167 other cell types or tissues"/>
</dbReference>
<dbReference type="ExpressionAtlas" id="Q62132">
    <property type="expression patterns" value="baseline and differential"/>
</dbReference>
<dbReference type="GO" id="GO:0030054">
    <property type="term" value="C:cell junction"/>
    <property type="evidence" value="ECO:0007669"/>
    <property type="project" value="Ensembl"/>
</dbReference>
<dbReference type="GO" id="GO:0005829">
    <property type="term" value="C:cytosol"/>
    <property type="evidence" value="ECO:0007669"/>
    <property type="project" value="Ensembl"/>
</dbReference>
<dbReference type="GO" id="GO:0005886">
    <property type="term" value="C:plasma membrane"/>
    <property type="evidence" value="ECO:0007669"/>
    <property type="project" value="UniProtKB-SubCell"/>
</dbReference>
<dbReference type="GO" id="GO:0019901">
    <property type="term" value="F:protein kinase binding"/>
    <property type="evidence" value="ECO:0000314"/>
    <property type="project" value="UniProtKB"/>
</dbReference>
<dbReference type="GO" id="GO:0004725">
    <property type="term" value="F:protein tyrosine phosphatase activity"/>
    <property type="evidence" value="ECO:0000314"/>
    <property type="project" value="MGI"/>
</dbReference>
<dbReference type="GO" id="GO:0038128">
    <property type="term" value="P:ERBB2 signaling pathway"/>
    <property type="evidence" value="ECO:0007669"/>
    <property type="project" value="Ensembl"/>
</dbReference>
<dbReference type="GO" id="GO:0001701">
    <property type="term" value="P:in utero embryonic development"/>
    <property type="evidence" value="ECO:0000250"/>
    <property type="project" value="UniProtKB"/>
</dbReference>
<dbReference type="GO" id="GO:0010633">
    <property type="term" value="P:negative regulation of epithelial cell migration"/>
    <property type="evidence" value="ECO:0007669"/>
    <property type="project" value="Ensembl"/>
</dbReference>
<dbReference type="GO" id="GO:0070373">
    <property type="term" value="P:negative regulation of ERK1 and ERK2 cascade"/>
    <property type="evidence" value="ECO:0007669"/>
    <property type="project" value="Ensembl"/>
</dbReference>
<dbReference type="CDD" id="cd14611">
    <property type="entry name" value="R-PTPc-R"/>
    <property type="match status" value="1"/>
</dbReference>
<dbReference type="FunFam" id="3.90.190.10:FF:000020">
    <property type="entry name" value="Tyrosine-protein phosphatase non-receptor type 5"/>
    <property type="match status" value="1"/>
</dbReference>
<dbReference type="Gene3D" id="3.90.190.10">
    <property type="entry name" value="Protein tyrosine phosphatase superfamily"/>
    <property type="match status" value="1"/>
</dbReference>
<dbReference type="InterPro" id="IPR029021">
    <property type="entry name" value="Prot-tyrosine_phosphatase-like"/>
</dbReference>
<dbReference type="InterPro" id="IPR000242">
    <property type="entry name" value="PTP_cat"/>
</dbReference>
<dbReference type="InterPro" id="IPR016130">
    <property type="entry name" value="Tyr_Pase_AS"/>
</dbReference>
<dbReference type="InterPro" id="IPR003595">
    <property type="entry name" value="Tyr_Pase_cat"/>
</dbReference>
<dbReference type="InterPro" id="IPR000387">
    <property type="entry name" value="Tyr_Pase_dom"/>
</dbReference>
<dbReference type="InterPro" id="IPR008356">
    <property type="entry name" value="Tyr_Pase_KIM-con"/>
</dbReference>
<dbReference type="InterPro" id="IPR016334">
    <property type="entry name" value="Tyr_Pase_rcpt_R/non-rcpt_5"/>
</dbReference>
<dbReference type="PANTHER" id="PTHR46198">
    <property type="entry name" value="PROTEIN-TYROSINE-PHOSPHATASE"/>
    <property type="match status" value="1"/>
</dbReference>
<dbReference type="PANTHER" id="PTHR46198:SF2">
    <property type="entry name" value="RECEPTOR-TYPE TYROSINE-PROTEIN PHOSPHATASE R"/>
    <property type="match status" value="1"/>
</dbReference>
<dbReference type="Pfam" id="PF00102">
    <property type="entry name" value="Y_phosphatase"/>
    <property type="match status" value="1"/>
</dbReference>
<dbReference type="PIRSF" id="PIRSF001997">
    <property type="entry name" value="PTPRR"/>
    <property type="match status" value="1"/>
</dbReference>
<dbReference type="PRINTS" id="PR01778">
    <property type="entry name" value="KIMPTPASE"/>
</dbReference>
<dbReference type="PRINTS" id="PR00700">
    <property type="entry name" value="PRTYPHPHTASE"/>
</dbReference>
<dbReference type="SMART" id="SM00194">
    <property type="entry name" value="PTPc"/>
    <property type="match status" value="1"/>
</dbReference>
<dbReference type="SMART" id="SM00404">
    <property type="entry name" value="PTPc_motif"/>
    <property type="match status" value="1"/>
</dbReference>
<dbReference type="SUPFAM" id="SSF52799">
    <property type="entry name" value="(Phosphotyrosine protein) phosphatases II"/>
    <property type="match status" value="1"/>
</dbReference>
<dbReference type="PROSITE" id="PS00383">
    <property type="entry name" value="TYR_PHOSPHATASE_1"/>
    <property type="match status" value="1"/>
</dbReference>
<dbReference type="PROSITE" id="PS50056">
    <property type="entry name" value="TYR_PHOSPHATASE_2"/>
    <property type="match status" value="1"/>
</dbReference>
<dbReference type="PROSITE" id="PS50055">
    <property type="entry name" value="TYR_PHOSPHATASE_PTP"/>
    <property type="match status" value="1"/>
</dbReference>
<proteinExistence type="evidence at protein level"/>
<evidence type="ECO:0000250" key="1"/>
<evidence type="ECO:0000250" key="2">
    <source>
        <dbReference type="UniProtKB" id="Q15256"/>
    </source>
</evidence>
<evidence type="ECO:0000255" key="3"/>
<evidence type="ECO:0000255" key="4">
    <source>
        <dbReference type="PROSITE-ProRule" id="PRU00160"/>
    </source>
</evidence>
<evidence type="ECO:0000255" key="5">
    <source>
        <dbReference type="PROSITE-ProRule" id="PRU10044"/>
    </source>
</evidence>
<evidence type="ECO:0000256" key="6">
    <source>
        <dbReference type="SAM" id="MobiDB-lite"/>
    </source>
</evidence>
<evidence type="ECO:0000269" key="7">
    <source>
    </source>
</evidence>
<evidence type="ECO:0000269" key="8">
    <source>
    </source>
</evidence>
<evidence type="ECO:0000269" key="9">
    <source>
    </source>
</evidence>
<evidence type="ECO:0000269" key="10">
    <source>
    </source>
</evidence>
<evidence type="ECO:0000269" key="11">
    <source>
    </source>
</evidence>
<evidence type="ECO:0000303" key="12">
    <source>
    </source>
</evidence>
<evidence type="ECO:0000303" key="13">
    <source>
    </source>
</evidence>
<evidence type="ECO:0000305" key="14"/>
<evidence type="ECO:0007744" key="15">
    <source>
    </source>
</evidence>
<evidence type="ECO:0007829" key="16">
    <source>
        <dbReference type="PDB" id="1JLN"/>
    </source>
</evidence>